<feature type="chain" id="PRO_0000242866" description="ATP phosphoribosyltransferase regulatory subunit">
    <location>
        <begin position="1"/>
        <end position="361"/>
    </location>
</feature>
<protein>
    <recommendedName>
        <fullName evidence="1">ATP phosphoribosyltransferase regulatory subunit</fullName>
    </recommendedName>
</protein>
<keyword id="KW-0028">Amino-acid biosynthesis</keyword>
<keyword id="KW-0963">Cytoplasm</keyword>
<keyword id="KW-0368">Histidine biosynthesis</keyword>
<keyword id="KW-1185">Reference proteome</keyword>
<proteinExistence type="inferred from homology"/>
<dbReference type="EMBL" id="AP008226">
    <property type="protein sequence ID" value="BAD69952.1"/>
    <property type="molecule type" value="Genomic_DNA"/>
</dbReference>
<dbReference type="RefSeq" id="WP_011174219.1">
    <property type="nucleotide sequence ID" value="NC_006461.1"/>
</dbReference>
<dbReference type="RefSeq" id="YP_143395.1">
    <property type="nucleotide sequence ID" value="NC_006461.1"/>
</dbReference>
<dbReference type="SMR" id="Q5SM14"/>
<dbReference type="EnsemblBacteria" id="BAD69952">
    <property type="protein sequence ID" value="BAD69952"/>
    <property type="gene ID" value="BAD69952"/>
</dbReference>
<dbReference type="GeneID" id="3168065"/>
<dbReference type="KEGG" id="ttj:TTHA0129"/>
<dbReference type="PATRIC" id="fig|300852.9.peg.127"/>
<dbReference type="eggNOG" id="COG3705">
    <property type="taxonomic scope" value="Bacteria"/>
</dbReference>
<dbReference type="HOGENOM" id="CLU_025113_0_2_0"/>
<dbReference type="PhylomeDB" id="Q5SM14"/>
<dbReference type="UniPathway" id="UPA00031">
    <property type="reaction ID" value="UER00006"/>
</dbReference>
<dbReference type="Proteomes" id="UP000000532">
    <property type="component" value="Chromosome"/>
</dbReference>
<dbReference type="GO" id="GO:0005737">
    <property type="term" value="C:cytoplasm"/>
    <property type="evidence" value="ECO:0007669"/>
    <property type="project" value="UniProtKB-SubCell"/>
</dbReference>
<dbReference type="GO" id="GO:0004821">
    <property type="term" value="F:histidine-tRNA ligase activity"/>
    <property type="evidence" value="ECO:0007669"/>
    <property type="project" value="TreeGrafter"/>
</dbReference>
<dbReference type="GO" id="GO:0006427">
    <property type="term" value="P:histidyl-tRNA aminoacylation"/>
    <property type="evidence" value="ECO:0007669"/>
    <property type="project" value="TreeGrafter"/>
</dbReference>
<dbReference type="GO" id="GO:0000105">
    <property type="term" value="P:L-histidine biosynthetic process"/>
    <property type="evidence" value="ECO:0007669"/>
    <property type="project" value="UniProtKB-UniRule"/>
</dbReference>
<dbReference type="Gene3D" id="3.30.930.10">
    <property type="entry name" value="Bira Bifunctional Protein, Domain 2"/>
    <property type="match status" value="1"/>
</dbReference>
<dbReference type="HAMAP" id="MF_00125">
    <property type="entry name" value="HisZ"/>
    <property type="match status" value="1"/>
</dbReference>
<dbReference type="InterPro" id="IPR006195">
    <property type="entry name" value="aa-tRNA-synth_II"/>
</dbReference>
<dbReference type="InterPro" id="IPR045864">
    <property type="entry name" value="aa-tRNA-synth_II/BPL/LPL"/>
</dbReference>
<dbReference type="InterPro" id="IPR041715">
    <property type="entry name" value="HisRS-like_core"/>
</dbReference>
<dbReference type="InterPro" id="IPR004516">
    <property type="entry name" value="HisRS/HisZ"/>
</dbReference>
<dbReference type="InterPro" id="IPR004517">
    <property type="entry name" value="HisZ"/>
</dbReference>
<dbReference type="NCBIfam" id="NF008945">
    <property type="entry name" value="PRK12292.3-3"/>
    <property type="match status" value="1"/>
</dbReference>
<dbReference type="PANTHER" id="PTHR43707:SF1">
    <property type="entry name" value="HISTIDINE--TRNA LIGASE, MITOCHONDRIAL-RELATED"/>
    <property type="match status" value="1"/>
</dbReference>
<dbReference type="PANTHER" id="PTHR43707">
    <property type="entry name" value="HISTIDYL-TRNA SYNTHETASE"/>
    <property type="match status" value="1"/>
</dbReference>
<dbReference type="Pfam" id="PF13393">
    <property type="entry name" value="tRNA-synt_His"/>
    <property type="match status" value="1"/>
</dbReference>
<dbReference type="PIRSF" id="PIRSF001549">
    <property type="entry name" value="His-tRNA_synth"/>
    <property type="match status" value="1"/>
</dbReference>
<dbReference type="SUPFAM" id="SSF55681">
    <property type="entry name" value="Class II aaRS and biotin synthetases"/>
    <property type="match status" value="1"/>
</dbReference>
<dbReference type="PROSITE" id="PS50862">
    <property type="entry name" value="AA_TRNA_LIGASE_II"/>
    <property type="match status" value="1"/>
</dbReference>
<sequence>MIPEGTRFLLPPEARLKAEVVGKLQHLFRRHGYEPVELPALELYDPDHPLAERAFKLVDKTGEVLALRSEFTTLLAKLLRAHLGEGAHRFQYAGPLWLREADAELGRLREYTQVGLELLGATGPLADAEVLELAFAALEALGVQGEVEVGLPSLVGEVLKASGLPEALQRRAQQAIHRKNLPELKGLLAESPVPEEARKVLLALPDLYGGREVLKEARGLPLPPKAQEALAQLERTLDLLGRPVLLDLGMARRYEYYSGIFFRAYTPGFGLPLLGGGRYDGALFPKAAGFALGVERLLEALRLPKEEEPPEVLALDLKALRRFARERRTELFHGEDPVAYARRRGIPFLARGEELFRVEEA</sequence>
<comment type="function">
    <text evidence="1">Required for the first step of histidine biosynthesis. May allow the feedback regulation of ATP phosphoribosyltransferase activity by histidine.</text>
</comment>
<comment type="pathway">
    <text evidence="1">Amino-acid biosynthesis; L-histidine biosynthesis; L-histidine from 5-phospho-alpha-D-ribose 1-diphosphate: step 1/9.</text>
</comment>
<comment type="subunit">
    <text evidence="1">Heteromultimer composed of HisG and HisZ subunits.</text>
</comment>
<comment type="subcellular location">
    <subcellularLocation>
        <location evidence="1">Cytoplasm</location>
    </subcellularLocation>
</comment>
<comment type="miscellaneous">
    <text>This function is generally fulfilled by the C-terminal part of HisG, which is missing in some bacteria such as this one.</text>
</comment>
<comment type="similarity">
    <text evidence="1">Belongs to the class-II aminoacyl-tRNA synthetase family. HisZ subfamily.</text>
</comment>
<accession>Q5SM14</accession>
<gene>
    <name evidence="1" type="primary">hisZ</name>
    <name type="ordered locus">TTHA0129</name>
</gene>
<evidence type="ECO:0000255" key="1">
    <source>
        <dbReference type="HAMAP-Rule" id="MF_00125"/>
    </source>
</evidence>
<organism>
    <name type="scientific">Thermus thermophilus (strain ATCC 27634 / DSM 579 / HB8)</name>
    <dbReference type="NCBI Taxonomy" id="300852"/>
    <lineage>
        <taxon>Bacteria</taxon>
        <taxon>Thermotogati</taxon>
        <taxon>Deinococcota</taxon>
        <taxon>Deinococci</taxon>
        <taxon>Thermales</taxon>
        <taxon>Thermaceae</taxon>
        <taxon>Thermus</taxon>
    </lineage>
</organism>
<reference key="1">
    <citation type="submission" date="2004-11" db="EMBL/GenBank/DDBJ databases">
        <title>Complete genome sequence of Thermus thermophilus HB8.</title>
        <authorList>
            <person name="Masui R."/>
            <person name="Kurokawa K."/>
            <person name="Nakagawa N."/>
            <person name="Tokunaga F."/>
            <person name="Koyama Y."/>
            <person name="Shibata T."/>
            <person name="Oshima T."/>
            <person name="Yokoyama S."/>
            <person name="Yasunaga T."/>
            <person name="Kuramitsu S."/>
        </authorList>
    </citation>
    <scope>NUCLEOTIDE SEQUENCE [LARGE SCALE GENOMIC DNA]</scope>
    <source>
        <strain>ATCC 27634 / DSM 579 / HB8</strain>
    </source>
</reference>
<name>HISZ_THET8</name>